<proteinExistence type="inferred from homology"/>
<accession>Q0AAW0</accession>
<sequence>MSDTKVYPVPDYIREKAHITKDTYEEMYRRSLDDPEGFWGEQAEKFLDWFSKWDKVYHSDLKNGEIRFFEGGKLNVAHNCLDRHLEQRGDQTAIIWEGDDPNNSEHITYKDLHERVCRLANAMKARGVKKGDRVCIYLPMIPEAAVAMLACARIGAIHSIVFGGFSPDALKDRIQNADCETVITADEGVRGGRNVALKSNADKALESCPDVKNVFVVKRTGGDIDWKEGRDIWYHEAVADVSADCPAEELDAEDPLFILYTSGSTGKPKGVQHCSAGYLLGAAMTHKYVFDYQEGEVYWCTADVGWVTGHSYIVYGPLANGATTLMFEGVPTYPSAARCWEVVDKHNVSIFYTAPTAIRALMGQGNEHVTKTSRKSLRILGTVGEPINPEAWEWYYNVVGDGRCPIVDTWWQTETGSILIAPLPGATDLKPGSATLPFFGVEPALVDPEGKELEGAASGNLVIKRAWPSMMRTVYGDHKRFMETYLAAYPGMYFTGDGARRDEDGYYWITGRVDDVINVSGHRMGTAEVESALVLHDAVAEAAVVGYPHDIKGQGIYAYVTLMAGVEPSDELKKELVKLVSNEIGPIAKPDVIQWAPGLPKTRSGKIMRRILRKVAANELDSLGDTSTLADPTVVDNLIEDRPNK</sequence>
<organism>
    <name type="scientific">Alkalilimnicola ehrlichii (strain ATCC BAA-1101 / DSM 17681 / MLHE-1)</name>
    <dbReference type="NCBI Taxonomy" id="187272"/>
    <lineage>
        <taxon>Bacteria</taxon>
        <taxon>Pseudomonadati</taxon>
        <taxon>Pseudomonadota</taxon>
        <taxon>Gammaproteobacteria</taxon>
        <taxon>Chromatiales</taxon>
        <taxon>Ectothiorhodospiraceae</taxon>
        <taxon>Alkalilimnicola</taxon>
    </lineage>
</organism>
<gene>
    <name evidence="1" type="primary">acsA</name>
    <name type="ordered locus">Mlg_0673</name>
</gene>
<name>ACSA_ALKEH</name>
<protein>
    <recommendedName>
        <fullName evidence="1">Acetyl-coenzyme A synthetase</fullName>
        <shortName evidence="1">AcCoA synthetase</shortName>
        <shortName evidence="1">Acs</shortName>
        <ecNumber evidence="1">6.2.1.1</ecNumber>
    </recommendedName>
    <alternativeName>
        <fullName evidence="1">Acetate--CoA ligase</fullName>
    </alternativeName>
    <alternativeName>
        <fullName evidence="1">Acyl-activating enzyme</fullName>
    </alternativeName>
</protein>
<feature type="chain" id="PRO_1000065268" description="Acetyl-coenzyme A synthetase">
    <location>
        <begin position="1"/>
        <end position="645"/>
    </location>
</feature>
<feature type="binding site" evidence="1">
    <location>
        <begin position="190"/>
        <end position="193"/>
    </location>
    <ligand>
        <name>CoA</name>
        <dbReference type="ChEBI" id="CHEBI:57287"/>
    </ligand>
</feature>
<feature type="binding site" evidence="1">
    <location>
        <position position="308"/>
    </location>
    <ligand>
        <name>CoA</name>
        <dbReference type="ChEBI" id="CHEBI:57287"/>
    </ligand>
</feature>
<feature type="binding site" evidence="1">
    <location>
        <begin position="384"/>
        <end position="386"/>
    </location>
    <ligand>
        <name>ATP</name>
        <dbReference type="ChEBI" id="CHEBI:30616"/>
    </ligand>
</feature>
<feature type="binding site" evidence="1">
    <location>
        <begin position="408"/>
        <end position="413"/>
    </location>
    <ligand>
        <name>ATP</name>
        <dbReference type="ChEBI" id="CHEBI:30616"/>
    </ligand>
</feature>
<feature type="binding site" evidence="1">
    <location>
        <position position="497"/>
    </location>
    <ligand>
        <name>ATP</name>
        <dbReference type="ChEBI" id="CHEBI:30616"/>
    </ligand>
</feature>
<feature type="binding site" evidence="1">
    <location>
        <position position="512"/>
    </location>
    <ligand>
        <name>ATP</name>
        <dbReference type="ChEBI" id="CHEBI:30616"/>
    </ligand>
</feature>
<feature type="binding site" evidence="1">
    <location>
        <position position="520"/>
    </location>
    <ligand>
        <name>CoA</name>
        <dbReference type="ChEBI" id="CHEBI:57287"/>
    </ligand>
</feature>
<feature type="binding site" evidence="1">
    <location>
        <position position="523"/>
    </location>
    <ligand>
        <name>ATP</name>
        <dbReference type="ChEBI" id="CHEBI:30616"/>
    </ligand>
</feature>
<feature type="binding site" evidence="1">
    <location>
        <position position="534"/>
    </location>
    <ligand>
        <name>Mg(2+)</name>
        <dbReference type="ChEBI" id="CHEBI:18420"/>
    </ligand>
</feature>
<feature type="binding site" evidence="1">
    <location>
        <position position="536"/>
    </location>
    <ligand>
        <name>Mg(2+)</name>
        <dbReference type="ChEBI" id="CHEBI:18420"/>
    </ligand>
</feature>
<feature type="binding site" evidence="1">
    <location>
        <position position="539"/>
    </location>
    <ligand>
        <name>Mg(2+)</name>
        <dbReference type="ChEBI" id="CHEBI:18420"/>
    </ligand>
</feature>
<feature type="modified residue" description="N6-acetyllysine" evidence="1">
    <location>
        <position position="606"/>
    </location>
</feature>
<comment type="function">
    <text evidence="1">Catalyzes the conversion of acetate into acetyl-CoA (AcCoA), an essential intermediate at the junction of anabolic and catabolic pathways. AcsA undergoes a two-step reaction. In the first half reaction, AcsA combines acetate with ATP to form acetyl-adenylate (AcAMP) intermediate. In the second half reaction, it can then transfer the acetyl group from AcAMP to the sulfhydryl group of CoA, forming the product AcCoA.</text>
</comment>
<comment type="catalytic activity">
    <reaction evidence="1">
        <text>acetate + ATP + CoA = acetyl-CoA + AMP + diphosphate</text>
        <dbReference type="Rhea" id="RHEA:23176"/>
        <dbReference type="ChEBI" id="CHEBI:30089"/>
        <dbReference type="ChEBI" id="CHEBI:30616"/>
        <dbReference type="ChEBI" id="CHEBI:33019"/>
        <dbReference type="ChEBI" id="CHEBI:57287"/>
        <dbReference type="ChEBI" id="CHEBI:57288"/>
        <dbReference type="ChEBI" id="CHEBI:456215"/>
        <dbReference type="EC" id="6.2.1.1"/>
    </reaction>
</comment>
<comment type="cofactor">
    <cofactor evidence="1">
        <name>Mg(2+)</name>
        <dbReference type="ChEBI" id="CHEBI:18420"/>
    </cofactor>
</comment>
<comment type="PTM">
    <text evidence="1">Acetylated. Deacetylation by the SIR2-homolog deacetylase activates the enzyme.</text>
</comment>
<comment type="similarity">
    <text evidence="1">Belongs to the ATP-dependent AMP-binding enzyme family.</text>
</comment>
<reference key="1">
    <citation type="submission" date="2006-08" db="EMBL/GenBank/DDBJ databases">
        <title>Complete sequence of Alkalilimnicola ehrilichei MLHE-1.</title>
        <authorList>
            <person name="Copeland A."/>
            <person name="Lucas S."/>
            <person name="Lapidus A."/>
            <person name="Barry K."/>
            <person name="Detter J.C."/>
            <person name="Glavina del Rio T."/>
            <person name="Hammon N."/>
            <person name="Israni S."/>
            <person name="Dalin E."/>
            <person name="Tice H."/>
            <person name="Pitluck S."/>
            <person name="Sims D."/>
            <person name="Brettin T."/>
            <person name="Bruce D."/>
            <person name="Han C."/>
            <person name="Tapia R."/>
            <person name="Gilna P."/>
            <person name="Schmutz J."/>
            <person name="Larimer F."/>
            <person name="Land M."/>
            <person name="Hauser L."/>
            <person name="Kyrpides N."/>
            <person name="Mikhailova N."/>
            <person name="Oremland R.S."/>
            <person name="Hoeft S.E."/>
            <person name="Switzer-Blum J."/>
            <person name="Kulp T."/>
            <person name="King G."/>
            <person name="Tabita R."/>
            <person name="Witte B."/>
            <person name="Santini J.M."/>
            <person name="Basu P."/>
            <person name="Hollibaugh J.T."/>
            <person name="Xie G."/>
            <person name="Stolz J.F."/>
            <person name="Richardson P."/>
        </authorList>
    </citation>
    <scope>NUCLEOTIDE SEQUENCE [LARGE SCALE GENOMIC DNA]</scope>
    <source>
        <strain>ATCC BAA-1101 / DSM 17681 / MLHE-1</strain>
    </source>
</reference>
<keyword id="KW-0007">Acetylation</keyword>
<keyword id="KW-0067">ATP-binding</keyword>
<keyword id="KW-0436">Ligase</keyword>
<keyword id="KW-0460">Magnesium</keyword>
<keyword id="KW-0479">Metal-binding</keyword>
<keyword id="KW-0547">Nucleotide-binding</keyword>
<keyword id="KW-1185">Reference proteome</keyword>
<dbReference type="EC" id="6.2.1.1" evidence="1"/>
<dbReference type="EMBL" id="CP000453">
    <property type="protein sequence ID" value="ABI56027.1"/>
    <property type="molecule type" value="Genomic_DNA"/>
</dbReference>
<dbReference type="RefSeq" id="WP_011628422.1">
    <property type="nucleotide sequence ID" value="NC_008340.1"/>
</dbReference>
<dbReference type="SMR" id="Q0AAW0"/>
<dbReference type="KEGG" id="aeh:Mlg_0673"/>
<dbReference type="eggNOG" id="COG0365">
    <property type="taxonomic scope" value="Bacteria"/>
</dbReference>
<dbReference type="HOGENOM" id="CLU_000022_3_6_6"/>
<dbReference type="OrthoDB" id="9803968at2"/>
<dbReference type="Proteomes" id="UP000001962">
    <property type="component" value="Chromosome"/>
</dbReference>
<dbReference type="GO" id="GO:0005829">
    <property type="term" value="C:cytosol"/>
    <property type="evidence" value="ECO:0007669"/>
    <property type="project" value="TreeGrafter"/>
</dbReference>
<dbReference type="GO" id="GO:0003987">
    <property type="term" value="F:acetate-CoA ligase activity"/>
    <property type="evidence" value="ECO:0007669"/>
    <property type="project" value="UniProtKB-UniRule"/>
</dbReference>
<dbReference type="GO" id="GO:0016208">
    <property type="term" value="F:AMP binding"/>
    <property type="evidence" value="ECO:0007669"/>
    <property type="project" value="InterPro"/>
</dbReference>
<dbReference type="GO" id="GO:0005524">
    <property type="term" value="F:ATP binding"/>
    <property type="evidence" value="ECO:0007669"/>
    <property type="project" value="UniProtKB-KW"/>
</dbReference>
<dbReference type="GO" id="GO:0046872">
    <property type="term" value="F:metal ion binding"/>
    <property type="evidence" value="ECO:0007669"/>
    <property type="project" value="UniProtKB-KW"/>
</dbReference>
<dbReference type="GO" id="GO:0019427">
    <property type="term" value="P:acetyl-CoA biosynthetic process from acetate"/>
    <property type="evidence" value="ECO:0007669"/>
    <property type="project" value="InterPro"/>
</dbReference>
<dbReference type="CDD" id="cd05966">
    <property type="entry name" value="ACS"/>
    <property type="match status" value="1"/>
</dbReference>
<dbReference type="FunFam" id="3.30.300.30:FF:000004">
    <property type="entry name" value="Acetyl-coenzyme A synthetase"/>
    <property type="match status" value="1"/>
</dbReference>
<dbReference type="FunFam" id="3.40.50.12780:FF:000001">
    <property type="entry name" value="Acetyl-coenzyme A synthetase"/>
    <property type="match status" value="1"/>
</dbReference>
<dbReference type="Gene3D" id="3.30.300.30">
    <property type="match status" value="1"/>
</dbReference>
<dbReference type="Gene3D" id="3.40.50.12780">
    <property type="entry name" value="N-terminal domain of ligase-like"/>
    <property type="match status" value="1"/>
</dbReference>
<dbReference type="HAMAP" id="MF_01123">
    <property type="entry name" value="Ac_CoA_synth"/>
    <property type="match status" value="1"/>
</dbReference>
<dbReference type="InterPro" id="IPR011904">
    <property type="entry name" value="Ac_CoA_lig"/>
</dbReference>
<dbReference type="InterPro" id="IPR032387">
    <property type="entry name" value="ACAS_N"/>
</dbReference>
<dbReference type="InterPro" id="IPR025110">
    <property type="entry name" value="AMP-bd_C"/>
</dbReference>
<dbReference type="InterPro" id="IPR045851">
    <property type="entry name" value="AMP-bd_C_sf"/>
</dbReference>
<dbReference type="InterPro" id="IPR020845">
    <property type="entry name" value="AMP-binding_CS"/>
</dbReference>
<dbReference type="InterPro" id="IPR000873">
    <property type="entry name" value="AMP-dep_synth/lig_dom"/>
</dbReference>
<dbReference type="InterPro" id="IPR042099">
    <property type="entry name" value="ANL_N_sf"/>
</dbReference>
<dbReference type="NCBIfam" id="TIGR02188">
    <property type="entry name" value="Ac_CoA_lig_AcsA"/>
    <property type="match status" value="1"/>
</dbReference>
<dbReference type="NCBIfam" id="NF001208">
    <property type="entry name" value="PRK00174.1"/>
    <property type="match status" value="1"/>
</dbReference>
<dbReference type="PANTHER" id="PTHR24095">
    <property type="entry name" value="ACETYL-COENZYME A SYNTHETASE"/>
    <property type="match status" value="1"/>
</dbReference>
<dbReference type="PANTHER" id="PTHR24095:SF14">
    <property type="entry name" value="ACETYL-COENZYME A SYNTHETASE 1"/>
    <property type="match status" value="1"/>
</dbReference>
<dbReference type="Pfam" id="PF16177">
    <property type="entry name" value="ACAS_N"/>
    <property type="match status" value="1"/>
</dbReference>
<dbReference type="Pfam" id="PF00501">
    <property type="entry name" value="AMP-binding"/>
    <property type="match status" value="1"/>
</dbReference>
<dbReference type="Pfam" id="PF13193">
    <property type="entry name" value="AMP-binding_C"/>
    <property type="match status" value="1"/>
</dbReference>
<dbReference type="SUPFAM" id="SSF56801">
    <property type="entry name" value="Acetyl-CoA synthetase-like"/>
    <property type="match status" value="1"/>
</dbReference>
<dbReference type="PROSITE" id="PS00455">
    <property type="entry name" value="AMP_BINDING"/>
    <property type="match status" value="1"/>
</dbReference>
<evidence type="ECO:0000255" key="1">
    <source>
        <dbReference type="HAMAP-Rule" id="MF_01123"/>
    </source>
</evidence>